<keyword id="KW-0963">Cytoplasm</keyword>
<keyword id="KW-0501">Molybdenum cofactor biosynthesis</keyword>
<dbReference type="EMBL" id="CP001120">
    <property type="protein sequence ID" value="ACF69634.1"/>
    <property type="molecule type" value="Genomic_DNA"/>
</dbReference>
<dbReference type="RefSeq" id="WP_001059747.1">
    <property type="nucleotide sequence ID" value="NC_011083.1"/>
</dbReference>
<dbReference type="SMR" id="B4TBX1"/>
<dbReference type="KEGG" id="seh:SeHA_C4365"/>
<dbReference type="HOGENOM" id="CLU_056887_2_0_6"/>
<dbReference type="Proteomes" id="UP000001866">
    <property type="component" value="Chromosome"/>
</dbReference>
<dbReference type="GO" id="GO:0005737">
    <property type="term" value="C:cytoplasm"/>
    <property type="evidence" value="ECO:0007669"/>
    <property type="project" value="UniProtKB-SubCell"/>
</dbReference>
<dbReference type="GO" id="GO:0097163">
    <property type="term" value="F:sulfur carrier activity"/>
    <property type="evidence" value="ECO:0007669"/>
    <property type="project" value="UniProtKB-UniRule"/>
</dbReference>
<dbReference type="GO" id="GO:0016783">
    <property type="term" value="F:sulfurtransferase activity"/>
    <property type="evidence" value="ECO:0007669"/>
    <property type="project" value="InterPro"/>
</dbReference>
<dbReference type="GO" id="GO:0006777">
    <property type="term" value="P:Mo-molybdopterin cofactor biosynthetic process"/>
    <property type="evidence" value="ECO:0007669"/>
    <property type="project" value="UniProtKB-UniRule"/>
</dbReference>
<dbReference type="Gene3D" id="3.10.20.10">
    <property type="match status" value="1"/>
</dbReference>
<dbReference type="Gene3D" id="3.40.140.10">
    <property type="entry name" value="Cytidine Deaminase, domain 2"/>
    <property type="match status" value="1"/>
</dbReference>
<dbReference type="HAMAP" id="MF_00187">
    <property type="entry name" value="FdhD"/>
    <property type="match status" value="1"/>
</dbReference>
<dbReference type="InterPro" id="IPR016193">
    <property type="entry name" value="Cytidine_deaminase-like"/>
</dbReference>
<dbReference type="InterPro" id="IPR003786">
    <property type="entry name" value="FdhD"/>
</dbReference>
<dbReference type="NCBIfam" id="TIGR00129">
    <property type="entry name" value="fdhD_narQ"/>
    <property type="match status" value="1"/>
</dbReference>
<dbReference type="PANTHER" id="PTHR30592">
    <property type="entry name" value="FORMATE DEHYDROGENASE"/>
    <property type="match status" value="1"/>
</dbReference>
<dbReference type="PANTHER" id="PTHR30592:SF1">
    <property type="entry name" value="SULFUR CARRIER PROTEIN FDHD"/>
    <property type="match status" value="1"/>
</dbReference>
<dbReference type="Pfam" id="PF02634">
    <property type="entry name" value="FdhD-NarQ"/>
    <property type="match status" value="1"/>
</dbReference>
<dbReference type="PIRSF" id="PIRSF015626">
    <property type="entry name" value="FdhD"/>
    <property type="match status" value="1"/>
</dbReference>
<dbReference type="SUPFAM" id="SSF53927">
    <property type="entry name" value="Cytidine deaminase-like"/>
    <property type="match status" value="1"/>
</dbReference>
<evidence type="ECO:0000255" key="1">
    <source>
        <dbReference type="HAMAP-Rule" id="MF_00187"/>
    </source>
</evidence>
<reference key="1">
    <citation type="journal article" date="2011" name="J. Bacteriol.">
        <title>Comparative genomics of 28 Salmonella enterica isolates: evidence for CRISPR-mediated adaptive sublineage evolution.</title>
        <authorList>
            <person name="Fricke W.F."/>
            <person name="Mammel M.K."/>
            <person name="McDermott P.F."/>
            <person name="Tartera C."/>
            <person name="White D.G."/>
            <person name="Leclerc J.E."/>
            <person name="Ravel J."/>
            <person name="Cebula T.A."/>
        </authorList>
    </citation>
    <scope>NUCLEOTIDE SEQUENCE [LARGE SCALE GENOMIC DNA]</scope>
    <source>
        <strain>SL476</strain>
    </source>
</reference>
<comment type="function">
    <text evidence="1">Required for formate dehydrogenase (FDH) activity. Acts as a sulfur carrier protein that transfers sulfur from IscS to the molybdenum cofactor prior to its insertion into FDH.</text>
</comment>
<comment type="subcellular location">
    <subcellularLocation>
        <location evidence="1">Cytoplasm</location>
    </subcellularLocation>
</comment>
<comment type="similarity">
    <text evidence="1">Belongs to the FdhD family.</text>
</comment>
<accession>B4TBX1</accession>
<proteinExistence type="inferred from homology"/>
<sequence length="278" mass="30260">MNNILSEEVLNVTDFTTSRQLTLWKREDLQSSQLDDVAEEVPVALVYNGISHVVMMASPKDLTHFAMGFSLSEGIIDSPREIYGMDVVPSCNGLEVQIDLSSRRFMGLKARRRALAGRTGCGVCGVEQLNDIGKPVQPLPFSQTFNLGNLDRALKHLNDFQPTGKLTGCTHAAAWVMPSGELAGGHEDVGRHVALDKLLGRRATEGEEWRQGAALVSSRASYEMVQKSAMCGVEILFAVSAATTLAVEVAERCNLTLVGFCKPGRATIYTHPQRLIAD</sequence>
<protein>
    <recommendedName>
        <fullName evidence="1">Sulfur carrier protein FdhD</fullName>
    </recommendedName>
</protein>
<feature type="chain" id="PRO_1000098790" description="Sulfur carrier protein FdhD">
    <location>
        <begin position="1"/>
        <end position="278"/>
    </location>
</feature>
<feature type="active site" description="Cysteine persulfide intermediate" evidence="1">
    <location>
        <position position="121"/>
    </location>
</feature>
<feature type="binding site" evidence="1">
    <location>
        <begin position="260"/>
        <end position="265"/>
    </location>
    <ligand>
        <name>Mo-bis(molybdopterin guanine dinucleotide)</name>
        <dbReference type="ChEBI" id="CHEBI:60539"/>
    </ligand>
</feature>
<gene>
    <name evidence="1" type="primary">fdhD</name>
    <name type="ordered locus">SeHA_C4365</name>
</gene>
<organism>
    <name type="scientific">Salmonella heidelberg (strain SL476)</name>
    <dbReference type="NCBI Taxonomy" id="454169"/>
    <lineage>
        <taxon>Bacteria</taxon>
        <taxon>Pseudomonadati</taxon>
        <taxon>Pseudomonadota</taxon>
        <taxon>Gammaproteobacteria</taxon>
        <taxon>Enterobacterales</taxon>
        <taxon>Enterobacteriaceae</taxon>
        <taxon>Salmonella</taxon>
    </lineage>
</organism>
<name>FDHD_SALHS</name>